<name>UNG_NEIM0</name>
<dbReference type="EC" id="3.2.2.27" evidence="1"/>
<dbReference type="EMBL" id="CP000381">
    <property type="protein sequence ID" value="ABX73277.1"/>
    <property type="molecule type" value="Genomic_DNA"/>
</dbReference>
<dbReference type="RefSeq" id="WP_002249159.1">
    <property type="nucleotide sequence ID" value="NC_010120.1"/>
</dbReference>
<dbReference type="SMR" id="A9LZA2"/>
<dbReference type="KEGG" id="nmn:NMCC_1101"/>
<dbReference type="HOGENOM" id="CLU_032162_3_0_4"/>
<dbReference type="Proteomes" id="UP000001177">
    <property type="component" value="Chromosome"/>
</dbReference>
<dbReference type="GO" id="GO:0005737">
    <property type="term" value="C:cytoplasm"/>
    <property type="evidence" value="ECO:0007669"/>
    <property type="project" value="UniProtKB-SubCell"/>
</dbReference>
<dbReference type="GO" id="GO:0004844">
    <property type="term" value="F:uracil DNA N-glycosylase activity"/>
    <property type="evidence" value="ECO:0007669"/>
    <property type="project" value="UniProtKB-UniRule"/>
</dbReference>
<dbReference type="GO" id="GO:0097510">
    <property type="term" value="P:base-excision repair, AP site formation via deaminated base removal"/>
    <property type="evidence" value="ECO:0007669"/>
    <property type="project" value="TreeGrafter"/>
</dbReference>
<dbReference type="CDD" id="cd10027">
    <property type="entry name" value="UDG-F1-like"/>
    <property type="match status" value="1"/>
</dbReference>
<dbReference type="FunFam" id="3.40.470.10:FF:000001">
    <property type="entry name" value="Uracil-DNA glycosylase"/>
    <property type="match status" value="1"/>
</dbReference>
<dbReference type="Gene3D" id="3.40.470.10">
    <property type="entry name" value="Uracil-DNA glycosylase-like domain"/>
    <property type="match status" value="1"/>
</dbReference>
<dbReference type="HAMAP" id="MF_00148">
    <property type="entry name" value="UDG"/>
    <property type="match status" value="1"/>
</dbReference>
<dbReference type="InterPro" id="IPR002043">
    <property type="entry name" value="UDG_fam1"/>
</dbReference>
<dbReference type="InterPro" id="IPR018085">
    <property type="entry name" value="Ura-DNA_Glyclase_AS"/>
</dbReference>
<dbReference type="InterPro" id="IPR005122">
    <property type="entry name" value="Uracil-DNA_glycosylase-like"/>
</dbReference>
<dbReference type="InterPro" id="IPR036895">
    <property type="entry name" value="Uracil-DNA_glycosylase-like_sf"/>
</dbReference>
<dbReference type="NCBIfam" id="NF003588">
    <property type="entry name" value="PRK05254.1-1"/>
    <property type="match status" value="1"/>
</dbReference>
<dbReference type="NCBIfam" id="NF003589">
    <property type="entry name" value="PRK05254.1-2"/>
    <property type="match status" value="1"/>
</dbReference>
<dbReference type="NCBIfam" id="NF003591">
    <property type="entry name" value="PRK05254.1-4"/>
    <property type="match status" value="1"/>
</dbReference>
<dbReference type="NCBIfam" id="NF003592">
    <property type="entry name" value="PRK05254.1-5"/>
    <property type="match status" value="1"/>
</dbReference>
<dbReference type="NCBIfam" id="TIGR00628">
    <property type="entry name" value="ung"/>
    <property type="match status" value="1"/>
</dbReference>
<dbReference type="PANTHER" id="PTHR11264">
    <property type="entry name" value="URACIL-DNA GLYCOSYLASE"/>
    <property type="match status" value="1"/>
</dbReference>
<dbReference type="PANTHER" id="PTHR11264:SF0">
    <property type="entry name" value="URACIL-DNA GLYCOSYLASE"/>
    <property type="match status" value="1"/>
</dbReference>
<dbReference type="Pfam" id="PF03167">
    <property type="entry name" value="UDG"/>
    <property type="match status" value="1"/>
</dbReference>
<dbReference type="SMART" id="SM00986">
    <property type="entry name" value="UDG"/>
    <property type="match status" value="1"/>
</dbReference>
<dbReference type="SMART" id="SM00987">
    <property type="entry name" value="UreE_C"/>
    <property type="match status" value="1"/>
</dbReference>
<dbReference type="SUPFAM" id="SSF52141">
    <property type="entry name" value="Uracil-DNA glycosylase-like"/>
    <property type="match status" value="1"/>
</dbReference>
<dbReference type="PROSITE" id="PS00130">
    <property type="entry name" value="U_DNA_GLYCOSYLASE"/>
    <property type="match status" value="1"/>
</dbReference>
<gene>
    <name evidence="1" type="primary">ung</name>
    <name type="ordered locus">NMCC_1101</name>
</gene>
<reference key="1">
    <citation type="journal article" date="2008" name="Genomics">
        <title>Characterization of ST-4821 complex, a unique Neisseria meningitidis clone.</title>
        <authorList>
            <person name="Peng J."/>
            <person name="Yang L."/>
            <person name="Yang F."/>
            <person name="Yang J."/>
            <person name="Yan Y."/>
            <person name="Nie H."/>
            <person name="Zhang X."/>
            <person name="Xiong Z."/>
            <person name="Jiang Y."/>
            <person name="Cheng F."/>
            <person name="Xu X."/>
            <person name="Chen S."/>
            <person name="Sun L."/>
            <person name="Li W."/>
            <person name="Shen Y."/>
            <person name="Shao Z."/>
            <person name="Liang X."/>
            <person name="Xu J."/>
            <person name="Jin Q."/>
        </authorList>
    </citation>
    <scope>NUCLEOTIDE SEQUENCE [LARGE SCALE GENOMIC DNA]</scope>
    <source>
        <strain>053442</strain>
    </source>
</reference>
<accession>A9LZA2</accession>
<keyword id="KW-0963">Cytoplasm</keyword>
<keyword id="KW-0227">DNA damage</keyword>
<keyword id="KW-0234">DNA repair</keyword>
<keyword id="KW-0378">Hydrolase</keyword>
<feature type="chain" id="PRO_1000076676" description="Uracil-DNA glycosylase">
    <location>
        <begin position="1"/>
        <end position="219"/>
    </location>
</feature>
<feature type="active site" description="Proton acceptor" evidence="1">
    <location>
        <position position="61"/>
    </location>
</feature>
<protein>
    <recommendedName>
        <fullName evidence="1">Uracil-DNA glycosylase</fullName>
        <shortName evidence="1">UDG</shortName>
        <ecNumber evidence="1">3.2.2.27</ecNumber>
    </recommendedName>
</protein>
<evidence type="ECO:0000255" key="1">
    <source>
        <dbReference type="HAMAP-Rule" id="MF_00148"/>
    </source>
</evidence>
<proteinExistence type="inferred from homology"/>
<sequence length="219" mass="24629">MDTWHDALGGEKQQPYFQEILNAVRQERLSGQIIYPPAADVFNAFRLTAFDRVKAVILGQDPYHGAGQAHGLAFSVRQGIRIPPSLLNIYKELETDIEGFSIPAHGCLTAWAEQGVLLLNTVLTVRAGQAHSHALLGWERFTDTVIRQLAAHRKHLVFMLWGGYAQQKRKLIDSQNHLILTAPHPSPLSAYRGFFGCRHFSQANSYLSRHGIDPINWKL</sequence>
<organism>
    <name type="scientific">Neisseria meningitidis serogroup C (strain 053442)</name>
    <dbReference type="NCBI Taxonomy" id="374833"/>
    <lineage>
        <taxon>Bacteria</taxon>
        <taxon>Pseudomonadati</taxon>
        <taxon>Pseudomonadota</taxon>
        <taxon>Betaproteobacteria</taxon>
        <taxon>Neisseriales</taxon>
        <taxon>Neisseriaceae</taxon>
        <taxon>Neisseria</taxon>
    </lineage>
</organism>
<comment type="function">
    <text evidence="1">Excises uracil residues from the DNA which can arise as a result of misincorporation of dUMP residues by DNA polymerase or due to deamination of cytosine.</text>
</comment>
<comment type="catalytic activity">
    <reaction evidence="1">
        <text>Hydrolyzes single-stranded DNA or mismatched double-stranded DNA and polynucleotides, releasing free uracil.</text>
        <dbReference type="EC" id="3.2.2.27"/>
    </reaction>
</comment>
<comment type="subcellular location">
    <subcellularLocation>
        <location evidence="1">Cytoplasm</location>
    </subcellularLocation>
</comment>
<comment type="similarity">
    <text evidence="1">Belongs to the uracil-DNA glycosylase (UDG) superfamily. UNG family.</text>
</comment>